<feature type="initiator methionine" description="Removed" evidence="1">
    <location>
        <position position="1"/>
    </location>
</feature>
<feature type="chain" id="PRO_0000052557" description="Hemoglobin subunit alpha-A">
    <location>
        <begin position="2"/>
        <end position="142"/>
    </location>
</feature>
<feature type="domain" description="Globin" evidence="2">
    <location>
        <begin position="2"/>
        <end position="142"/>
    </location>
</feature>
<feature type="binding site" evidence="2">
    <location>
        <position position="59"/>
    </location>
    <ligand>
        <name>O2</name>
        <dbReference type="ChEBI" id="CHEBI:15379"/>
    </ligand>
</feature>
<feature type="binding site" description="proximal binding residue" evidence="2">
    <location>
        <position position="88"/>
    </location>
    <ligand>
        <name>heme b</name>
        <dbReference type="ChEBI" id="CHEBI:60344"/>
    </ligand>
    <ligandPart>
        <name>Fe</name>
        <dbReference type="ChEBI" id="CHEBI:18248"/>
    </ligandPart>
</feature>
<protein>
    <recommendedName>
        <fullName>Hemoglobin subunit alpha-A</fullName>
    </recommendedName>
    <alternativeName>
        <fullName>Alpha-A-globin</fullName>
    </alternativeName>
    <alternativeName>
        <fullName>Hemoglobin alpha-A chain</fullName>
    </alternativeName>
</protein>
<reference key="1">
    <citation type="journal article" date="1983" name="Hoppe-Seyler's Z. Physiol. Chem.">
        <title>Hemoglobin of the golden eagle (Aquila chrysaetos, Accipitriformes): amino acid sequence of the alpha A- and beta chains of the principal component.</title>
        <authorList>
            <person name="Oberthur W."/>
            <person name="Braunitzer G."/>
            <person name="Grimm F."/>
            <person name="Kosters J."/>
        </authorList>
    </citation>
    <scope>PROTEIN SEQUENCE OF 2-142</scope>
</reference>
<gene>
    <name type="primary">HBAA</name>
</gene>
<comment type="function">
    <text>Involved in oxygen transport from the lung to the various peripheral tissues.</text>
</comment>
<comment type="subunit">
    <text>Heterotetramer of two alpha chains and two beta chains.</text>
</comment>
<comment type="tissue specificity">
    <text>Red blood cells.</text>
</comment>
<comment type="miscellaneous">
    <text>This chain occurs in hemoglobin A, which is the major component (60%) of adult hemoglobin molecules.</text>
</comment>
<comment type="similarity">
    <text evidence="2">Belongs to the globin family.</text>
</comment>
<organism>
    <name type="scientific">Aquila chrysaetos</name>
    <name type="common">Golden eagle</name>
    <dbReference type="NCBI Taxonomy" id="8962"/>
    <lineage>
        <taxon>Eukaryota</taxon>
        <taxon>Metazoa</taxon>
        <taxon>Chordata</taxon>
        <taxon>Craniata</taxon>
        <taxon>Vertebrata</taxon>
        <taxon>Euteleostomi</taxon>
        <taxon>Archelosauria</taxon>
        <taxon>Archosauria</taxon>
        <taxon>Dinosauria</taxon>
        <taxon>Saurischia</taxon>
        <taxon>Theropoda</taxon>
        <taxon>Coelurosauria</taxon>
        <taxon>Aves</taxon>
        <taxon>Neognathae</taxon>
        <taxon>Neoaves</taxon>
        <taxon>Telluraves</taxon>
        <taxon>Accipitrimorphae</taxon>
        <taxon>Accipitriformes</taxon>
        <taxon>Accipitridae</taxon>
        <taxon>Accipitrinae</taxon>
        <taxon>Aquila</taxon>
    </lineage>
</organism>
<dbReference type="PIR" id="A02314">
    <property type="entry name" value="HAQC"/>
</dbReference>
<dbReference type="SMR" id="P01993"/>
<dbReference type="GO" id="GO:0072562">
    <property type="term" value="C:blood microparticle"/>
    <property type="evidence" value="ECO:0007669"/>
    <property type="project" value="TreeGrafter"/>
</dbReference>
<dbReference type="GO" id="GO:0031838">
    <property type="term" value="C:haptoglobin-hemoglobin complex"/>
    <property type="evidence" value="ECO:0007669"/>
    <property type="project" value="TreeGrafter"/>
</dbReference>
<dbReference type="GO" id="GO:0005833">
    <property type="term" value="C:hemoglobin complex"/>
    <property type="evidence" value="ECO:0007669"/>
    <property type="project" value="InterPro"/>
</dbReference>
<dbReference type="GO" id="GO:0031720">
    <property type="term" value="F:haptoglobin binding"/>
    <property type="evidence" value="ECO:0007669"/>
    <property type="project" value="TreeGrafter"/>
</dbReference>
<dbReference type="GO" id="GO:0020037">
    <property type="term" value="F:heme binding"/>
    <property type="evidence" value="ECO:0007669"/>
    <property type="project" value="InterPro"/>
</dbReference>
<dbReference type="GO" id="GO:0005506">
    <property type="term" value="F:iron ion binding"/>
    <property type="evidence" value="ECO:0007669"/>
    <property type="project" value="InterPro"/>
</dbReference>
<dbReference type="GO" id="GO:0043177">
    <property type="term" value="F:organic acid binding"/>
    <property type="evidence" value="ECO:0007669"/>
    <property type="project" value="TreeGrafter"/>
</dbReference>
<dbReference type="GO" id="GO:0019825">
    <property type="term" value="F:oxygen binding"/>
    <property type="evidence" value="ECO:0007669"/>
    <property type="project" value="InterPro"/>
</dbReference>
<dbReference type="GO" id="GO:0005344">
    <property type="term" value="F:oxygen carrier activity"/>
    <property type="evidence" value="ECO:0007669"/>
    <property type="project" value="UniProtKB-KW"/>
</dbReference>
<dbReference type="GO" id="GO:0004601">
    <property type="term" value="F:peroxidase activity"/>
    <property type="evidence" value="ECO:0007669"/>
    <property type="project" value="TreeGrafter"/>
</dbReference>
<dbReference type="GO" id="GO:0042744">
    <property type="term" value="P:hydrogen peroxide catabolic process"/>
    <property type="evidence" value="ECO:0007669"/>
    <property type="project" value="TreeGrafter"/>
</dbReference>
<dbReference type="CDD" id="cd08927">
    <property type="entry name" value="Hb-alpha-like"/>
    <property type="match status" value="1"/>
</dbReference>
<dbReference type="FunFam" id="1.10.490.10:FF:000002">
    <property type="entry name" value="Hemoglobin subunit alpha"/>
    <property type="match status" value="1"/>
</dbReference>
<dbReference type="Gene3D" id="1.10.490.10">
    <property type="entry name" value="Globins"/>
    <property type="match status" value="1"/>
</dbReference>
<dbReference type="InterPro" id="IPR000971">
    <property type="entry name" value="Globin"/>
</dbReference>
<dbReference type="InterPro" id="IPR009050">
    <property type="entry name" value="Globin-like_sf"/>
</dbReference>
<dbReference type="InterPro" id="IPR012292">
    <property type="entry name" value="Globin/Proto"/>
</dbReference>
<dbReference type="InterPro" id="IPR002338">
    <property type="entry name" value="Hemoglobin_a-typ"/>
</dbReference>
<dbReference type="InterPro" id="IPR050056">
    <property type="entry name" value="Hemoglobin_oxygen_transport"/>
</dbReference>
<dbReference type="InterPro" id="IPR002339">
    <property type="entry name" value="Hemoglobin_pi"/>
</dbReference>
<dbReference type="PANTHER" id="PTHR11442">
    <property type="entry name" value="HEMOGLOBIN FAMILY MEMBER"/>
    <property type="match status" value="1"/>
</dbReference>
<dbReference type="PANTHER" id="PTHR11442:SF48">
    <property type="entry name" value="HEMOGLOBIN SUBUNIT ALPHA"/>
    <property type="match status" value="1"/>
</dbReference>
<dbReference type="Pfam" id="PF00042">
    <property type="entry name" value="Globin"/>
    <property type="match status" value="1"/>
</dbReference>
<dbReference type="PRINTS" id="PR00612">
    <property type="entry name" value="ALPHAHAEM"/>
</dbReference>
<dbReference type="PRINTS" id="PR00815">
    <property type="entry name" value="PIHAEM"/>
</dbReference>
<dbReference type="SUPFAM" id="SSF46458">
    <property type="entry name" value="Globin-like"/>
    <property type="match status" value="1"/>
</dbReference>
<dbReference type="PROSITE" id="PS01033">
    <property type="entry name" value="GLOBIN"/>
    <property type="match status" value="1"/>
</dbReference>
<evidence type="ECO:0000250" key="1"/>
<evidence type="ECO:0000255" key="2">
    <source>
        <dbReference type="PROSITE-ProRule" id="PRU00238"/>
    </source>
</evidence>
<sequence>MVLSANDKTNVKNVFTKISGHAEDYGAEALERMFTTYPPTKTYFPHFDLHHGSAQIKAHGKKVVGALIEAVNHIDDMAGALSKLSDLHAQKLRVDPVNFKLLGQCFLVVVAIHHPSVLTPEVHASLDKFLCAVGNVLTAKYR</sequence>
<name>HBA_AQUCH</name>
<keyword id="KW-0903">Direct protein sequencing</keyword>
<keyword id="KW-0349">Heme</keyword>
<keyword id="KW-0408">Iron</keyword>
<keyword id="KW-0479">Metal-binding</keyword>
<keyword id="KW-0561">Oxygen transport</keyword>
<keyword id="KW-0813">Transport</keyword>
<proteinExistence type="evidence at protein level"/>
<accession>P01993</accession>